<reference key="1">
    <citation type="journal article" date="1997" name="Nature">
        <title>The complete genome sequence of the hyperthermophilic, sulphate-reducing archaeon Archaeoglobus fulgidus.</title>
        <authorList>
            <person name="Klenk H.-P."/>
            <person name="Clayton R.A."/>
            <person name="Tomb J.-F."/>
            <person name="White O."/>
            <person name="Nelson K.E."/>
            <person name="Ketchum K.A."/>
            <person name="Dodson R.J."/>
            <person name="Gwinn M.L."/>
            <person name="Hickey E.K."/>
            <person name="Peterson J.D."/>
            <person name="Richardson D.L."/>
            <person name="Kerlavage A.R."/>
            <person name="Graham D.E."/>
            <person name="Kyrpides N.C."/>
            <person name="Fleischmann R.D."/>
            <person name="Quackenbush J."/>
            <person name="Lee N.H."/>
            <person name="Sutton G.G."/>
            <person name="Gill S.R."/>
            <person name="Kirkness E.F."/>
            <person name="Dougherty B.A."/>
            <person name="McKenney K."/>
            <person name="Adams M.D."/>
            <person name="Loftus B.J."/>
            <person name="Peterson S.N."/>
            <person name="Reich C.I."/>
            <person name="McNeil L.K."/>
            <person name="Badger J.H."/>
            <person name="Glodek A."/>
            <person name="Zhou L."/>
            <person name="Overbeek R."/>
            <person name="Gocayne J.D."/>
            <person name="Weidman J.F."/>
            <person name="McDonald L.A."/>
            <person name="Utterback T.R."/>
            <person name="Cotton M.D."/>
            <person name="Spriggs T."/>
            <person name="Artiach P."/>
            <person name="Kaine B.P."/>
            <person name="Sykes S.M."/>
            <person name="Sadow P.W."/>
            <person name="D'Andrea K.P."/>
            <person name="Bowman C."/>
            <person name="Fujii C."/>
            <person name="Garland S.A."/>
            <person name="Mason T.M."/>
            <person name="Olsen G.J."/>
            <person name="Fraser C.M."/>
            <person name="Smith H.O."/>
            <person name="Woese C.R."/>
            <person name="Venter J.C."/>
        </authorList>
    </citation>
    <scope>NUCLEOTIDE SEQUENCE [LARGE SCALE GENOMIC DNA]</scope>
    <source>
        <strain>ATCC 49558 / DSM 4304 / JCM 9628 / NBRC 100126 / VC-16</strain>
    </source>
</reference>
<dbReference type="EC" id="2.7.6.1" evidence="1"/>
<dbReference type="EMBL" id="AE000782">
    <property type="protein sequence ID" value="AAB90651.1"/>
    <property type="status" value="ALT_INIT"/>
    <property type="molecule type" value="Genomic_DNA"/>
</dbReference>
<dbReference type="PIR" id="E69323">
    <property type="entry name" value="E69323"/>
</dbReference>
<dbReference type="RefSeq" id="WP_048064254.1">
    <property type="nucleotide sequence ID" value="NC_000917.1"/>
</dbReference>
<dbReference type="SMR" id="O29666"/>
<dbReference type="STRING" id="224325.AF_0589"/>
<dbReference type="PaxDb" id="224325-AF_0589"/>
<dbReference type="EnsemblBacteria" id="AAB90651">
    <property type="protein sequence ID" value="AAB90651"/>
    <property type="gene ID" value="AF_0589"/>
</dbReference>
<dbReference type="KEGG" id="afu:AF_0589"/>
<dbReference type="eggNOG" id="arCOG00067">
    <property type="taxonomic scope" value="Archaea"/>
</dbReference>
<dbReference type="HOGENOM" id="CLU_033546_2_2_2"/>
<dbReference type="OrthoDB" id="371997at2157"/>
<dbReference type="PhylomeDB" id="O29666"/>
<dbReference type="UniPathway" id="UPA00087">
    <property type="reaction ID" value="UER00172"/>
</dbReference>
<dbReference type="Proteomes" id="UP000002199">
    <property type="component" value="Chromosome"/>
</dbReference>
<dbReference type="GO" id="GO:0005737">
    <property type="term" value="C:cytoplasm"/>
    <property type="evidence" value="ECO:0007669"/>
    <property type="project" value="UniProtKB-SubCell"/>
</dbReference>
<dbReference type="GO" id="GO:0002189">
    <property type="term" value="C:ribose phosphate diphosphokinase complex"/>
    <property type="evidence" value="ECO:0007669"/>
    <property type="project" value="TreeGrafter"/>
</dbReference>
<dbReference type="GO" id="GO:0005524">
    <property type="term" value="F:ATP binding"/>
    <property type="evidence" value="ECO:0007669"/>
    <property type="project" value="UniProtKB-KW"/>
</dbReference>
<dbReference type="GO" id="GO:0016301">
    <property type="term" value="F:kinase activity"/>
    <property type="evidence" value="ECO:0007669"/>
    <property type="project" value="UniProtKB-KW"/>
</dbReference>
<dbReference type="GO" id="GO:0000287">
    <property type="term" value="F:magnesium ion binding"/>
    <property type="evidence" value="ECO:0007669"/>
    <property type="project" value="UniProtKB-UniRule"/>
</dbReference>
<dbReference type="GO" id="GO:0004749">
    <property type="term" value="F:ribose phosphate diphosphokinase activity"/>
    <property type="evidence" value="ECO:0007669"/>
    <property type="project" value="UniProtKB-UniRule"/>
</dbReference>
<dbReference type="GO" id="GO:0006015">
    <property type="term" value="P:5-phosphoribose 1-diphosphate biosynthetic process"/>
    <property type="evidence" value="ECO:0007669"/>
    <property type="project" value="UniProtKB-UniRule"/>
</dbReference>
<dbReference type="GO" id="GO:0006164">
    <property type="term" value="P:purine nucleotide biosynthetic process"/>
    <property type="evidence" value="ECO:0007669"/>
    <property type="project" value="TreeGrafter"/>
</dbReference>
<dbReference type="CDD" id="cd06223">
    <property type="entry name" value="PRTases_typeI"/>
    <property type="match status" value="1"/>
</dbReference>
<dbReference type="FunFam" id="3.40.50.2020:FF:000014">
    <property type="entry name" value="Ribose-phosphate pyrophosphokinase 1"/>
    <property type="match status" value="1"/>
</dbReference>
<dbReference type="Gene3D" id="3.40.50.2020">
    <property type="match status" value="2"/>
</dbReference>
<dbReference type="HAMAP" id="MF_00583_A">
    <property type="entry name" value="RibP_PPkinase_A"/>
    <property type="match status" value="1"/>
</dbReference>
<dbReference type="InterPro" id="IPR029099">
    <property type="entry name" value="Pribosyltran_N"/>
</dbReference>
<dbReference type="InterPro" id="IPR000836">
    <property type="entry name" value="PRibTrfase_dom"/>
</dbReference>
<dbReference type="InterPro" id="IPR029057">
    <property type="entry name" value="PRTase-like"/>
</dbReference>
<dbReference type="InterPro" id="IPR005946">
    <property type="entry name" value="Rib-P_diPkinase"/>
</dbReference>
<dbReference type="InterPro" id="IPR037514">
    <property type="entry name" value="Rib-P_diPkinase_arc"/>
</dbReference>
<dbReference type="NCBIfam" id="TIGR01251">
    <property type="entry name" value="ribP_PPkin"/>
    <property type="match status" value="1"/>
</dbReference>
<dbReference type="PANTHER" id="PTHR10210">
    <property type="entry name" value="RIBOSE-PHOSPHATE DIPHOSPHOKINASE FAMILY MEMBER"/>
    <property type="match status" value="1"/>
</dbReference>
<dbReference type="PANTHER" id="PTHR10210:SF32">
    <property type="entry name" value="RIBOSE-PHOSPHATE PYROPHOSPHOKINASE 2"/>
    <property type="match status" value="1"/>
</dbReference>
<dbReference type="Pfam" id="PF14572">
    <property type="entry name" value="Pribosyl_synth"/>
    <property type="match status" value="1"/>
</dbReference>
<dbReference type="Pfam" id="PF13793">
    <property type="entry name" value="Pribosyltran_N"/>
    <property type="match status" value="1"/>
</dbReference>
<dbReference type="SMART" id="SM01400">
    <property type="entry name" value="Pribosyltran_N"/>
    <property type="match status" value="1"/>
</dbReference>
<dbReference type="SUPFAM" id="SSF53271">
    <property type="entry name" value="PRTase-like"/>
    <property type="match status" value="2"/>
</dbReference>
<keyword id="KW-0067">ATP-binding</keyword>
<keyword id="KW-0963">Cytoplasm</keyword>
<keyword id="KW-0418">Kinase</keyword>
<keyword id="KW-0460">Magnesium</keyword>
<keyword id="KW-0479">Metal-binding</keyword>
<keyword id="KW-0545">Nucleotide biosynthesis</keyword>
<keyword id="KW-0547">Nucleotide-binding</keyword>
<keyword id="KW-1185">Reference proteome</keyword>
<keyword id="KW-0808">Transferase</keyword>
<gene>
    <name evidence="1" type="primary">prs1</name>
    <name type="synonym">prsA-1</name>
    <name type="ordered locus">AF_0589</name>
</gene>
<comment type="function">
    <text evidence="1">Involved in the biosynthesis of the central metabolite phospho-alpha-D-ribosyl-1-pyrophosphate (PRPP) via the transfer of pyrophosphoryl group from ATP to 1-hydroxyl of ribose-5-phosphate (Rib-5-P).</text>
</comment>
<comment type="catalytic activity">
    <reaction evidence="1">
        <text>D-ribose 5-phosphate + ATP = 5-phospho-alpha-D-ribose 1-diphosphate + AMP + H(+)</text>
        <dbReference type="Rhea" id="RHEA:15609"/>
        <dbReference type="ChEBI" id="CHEBI:15378"/>
        <dbReference type="ChEBI" id="CHEBI:30616"/>
        <dbReference type="ChEBI" id="CHEBI:58017"/>
        <dbReference type="ChEBI" id="CHEBI:78346"/>
        <dbReference type="ChEBI" id="CHEBI:456215"/>
        <dbReference type="EC" id="2.7.6.1"/>
    </reaction>
</comment>
<comment type="cofactor">
    <cofactor evidence="1">
        <name>Mg(2+)</name>
        <dbReference type="ChEBI" id="CHEBI:18420"/>
    </cofactor>
    <text evidence="1">Binds 2 Mg(2+) ions per subunit.</text>
</comment>
<comment type="pathway">
    <text evidence="1">Metabolic intermediate biosynthesis; 5-phospho-alpha-D-ribose 1-diphosphate biosynthesis; 5-phospho-alpha-D-ribose 1-diphosphate from D-ribose 5-phosphate (route I): step 1/1.</text>
</comment>
<comment type="subcellular location">
    <subcellularLocation>
        <location evidence="1">Cytoplasm</location>
    </subcellularLocation>
</comment>
<comment type="similarity">
    <text evidence="1">Belongs to the ribose-phosphate pyrophosphokinase family. Class III (archaeal) subfamily.</text>
</comment>
<comment type="sequence caution" evidence="2">
    <conflict type="erroneous initiation">
        <sequence resource="EMBL-CDS" id="AAB90651"/>
    </conflict>
    <text>Extended N-terminus.</text>
</comment>
<organism>
    <name type="scientific">Archaeoglobus fulgidus (strain ATCC 49558 / DSM 4304 / JCM 9628 / NBRC 100126 / VC-16)</name>
    <dbReference type="NCBI Taxonomy" id="224325"/>
    <lineage>
        <taxon>Archaea</taxon>
        <taxon>Methanobacteriati</taxon>
        <taxon>Methanobacteriota</taxon>
        <taxon>Archaeoglobi</taxon>
        <taxon>Archaeoglobales</taxon>
        <taxon>Archaeoglobaceae</taxon>
        <taxon>Archaeoglobus</taxon>
    </lineage>
</organism>
<evidence type="ECO:0000255" key="1">
    <source>
        <dbReference type="HAMAP-Rule" id="MF_00583"/>
    </source>
</evidence>
<evidence type="ECO:0000305" key="2"/>
<feature type="chain" id="PRO_0000141234" description="Ribose-phosphate pyrophosphokinase 1">
    <location>
        <begin position="1"/>
        <end position="284"/>
    </location>
</feature>
<feature type="active site" evidence="1">
    <location>
        <position position="186"/>
    </location>
</feature>
<feature type="binding site" evidence="1">
    <location>
        <begin position="34"/>
        <end position="36"/>
    </location>
    <ligand>
        <name>ATP</name>
        <dbReference type="ChEBI" id="CHEBI:30616"/>
    </ligand>
</feature>
<feature type="binding site" evidence="1">
    <location>
        <position position="126"/>
    </location>
    <ligand>
        <name>Mg(2+)</name>
        <dbReference type="ChEBI" id="CHEBI:18420"/>
        <label>1</label>
    </ligand>
</feature>
<feature type="binding site" evidence="1">
    <location>
        <position position="163"/>
    </location>
    <ligand>
        <name>Mg(2+)</name>
        <dbReference type="ChEBI" id="CHEBI:18420"/>
        <label>2</label>
    </ligand>
</feature>
<feature type="binding site" evidence="1">
    <location>
        <position position="188"/>
    </location>
    <ligand>
        <name>D-ribose 5-phosphate</name>
        <dbReference type="ChEBI" id="CHEBI:78346"/>
    </ligand>
</feature>
<feature type="binding site" evidence="1">
    <location>
        <position position="211"/>
    </location>
    <ligand>
        <name>D-ribose 5-phosphate</name>
        <dbReference type="ChEBI" id="CHEBI:78346"/>
    </ligand>
</feature>
<feature type="binding site" evidence="1">
    <location>
        <begin position="215"/>
        <end position="219"/>
    </location>
    <ligand>
        <name>D-ribose 5-phosphate</name>
        <dbReference type="ChEBI" id="CHEBI:78346"/>
    </ligand>
</feature>
<sequence>MVILVGGTNGLMALKVAKISGLPLCYSHVDRYPDGEKYFRFASNIDGEDVVIFNSMHPNPDEIIFETLLIAETAYSNGARSVTCVFPYFAYARSLDTVKGEALPIKTVVKVLKAAGVKKIITVDFHLQENVFGVEHVDLTGMEKLAEYCLEEFSDSFTVLAPDEKAAFWAEKFAAKANCDVVALRKIRIDAENVIIDDLRTGVEGDVVIVDDIVSTGGTVCQAARIAKRAGARRVFVACTHAILARDAMMRILESGIEDIVSTDTILSPVSHVSVADVIASALS</sequence>
<proteinExistence type="inferred from homology"/>
<protein>
    <recommendedName>
        <fullName evidence="1">Ribose-phosphate pyrophosphokinase 1</fullName>
        <shortName evidence="1">RPPK 1</shortName>
        <ecNumber evidence="1">2.7.6.1</ecNumber>
    </recommendedName>
    <alternativeName>
        <fullName evidence="1">5-phospho-D-ribosyl alpha-1-diphosphate synthase 1</fullName>
    </alternativeName>
    <alternativeName>
        <fullName evidence="1">Phosphoribosyl diphosphate synthase 1</fullName>
    </alternativeName>
    <alternativeName>
        <fullName evidence="1">Phosphoribosyl pyrophosphate synthase 1</fullName>
        <shortName evidence="1">P-Rib-PP synthase 1</shortName>
        <shortName evidence="1">PRPP synthase 1</shortName>
        <shortName evidence="1">PRPPase 1</shortName>
    </alternativeName>
</protein>
<name>KPRS1_ARCFU</name>
<accession>O29666</accession>